<reference key="1">
    <citation type="journal article" date="1994" name="Nucleic Acids Res.">
        <title>Analysis of the Escherichia coli genome. V. DNA sequence of the region from 76.0 to 81.5 minutes.</title>
        <authorList>
            <person name="Sofia H.J."/>
            <person name="Burland V."/>
            <person name="Daniels D.L."/>
            <person name="Plunkett G. III"/>
            <person name="Blattner F.R."/>
        </authorList>
    </citation>
    <scope>NUCLEOTIDE SEQUENCE [LARGE SCALE GENOMIC DNA]</scope>
    <source>
        <strain>K12 / MG1655 / ATCC 47076</strain>
    </source>
</reference>
<reference key="2">
    <citation type="journal article" date="1997" name="Science">
        <title>The complete genome sequence of Escherichia coli K-12.</title>
        <authorList>
            <person name="Blattner F.R."/>
            <person name="Plunkett G. III"/>
            <person name="Bloch C.A."/>
            <person name="Perna N.T."/>
            <person name="Burland V."/>
            <person name="Riley M."/>
            <person name="Collado-Vides J."/>
            <person name="Glasner J.D."/>
            <person name="Rode C.K."/>
            <person name="Mayhew G.F."/>
            <person name="Gregor J."/>
            <person name="Davis N.W."/>
            <person name="Kirkpatrick H.A."/>
            <person name="Goeden M.A."/>
            <person name="Rose D.J."/>
            <person name="Mau B."/>
            <person name="Shao Y."/>
        </authorList>
    </citation>
    <scope>NUCLEOTIDE SEQUENCE [LARGE SCALE GENOMIC DNA]</scope>
    <source>
        <strain>K12 / MG1655 / ATCC 47076</strain>
    </source>
</reference>
<reference key="3">
    <citation type="journal article" date="2006" name="Mol. Syst. Biol.">
        <title>Highly accurate genome sequences of Escherichia coli K-12 strains MG1655 and W3110.</title>
        <authorList>
            <person name="Hayashi K."/>
            <person name="Morooka N."/>
            <person name="Yamamoto Y."/>
            <person name="Fujita K."/>
            <person name="Isono K."/>
            <person name="Choi S."/>
            <person name="Ohtsubo E."/>
            <person name="Baba T."/>
            <person name="Wanner B.L."/>
            <person name="Mori H."/>
            <person name="Horiuchi T."/>
        </authorList>
    </citation>
    <scope>NUCLEOTIDE SEQUENCE [LARGE SCALE GENOMIC DNA]</scope>
    <source>
        <strain>K12 / W3110 / ATCC 27325 / DSM 5911</strain>
    </source>
</reference>
<reference key="4">
    <citation type="journal article" date="1996" name="Genome Sci. Technol.">
        <title>Novel phosphotransferases system genes revealed by bacterial genome analysis: operons encoding homologues of sugar-specific permease domains of the phosphotransferase system and pentose catabolic enzymes.</title>
        <authorList>
            <person name="Reizer J."/>
            <person name="Charbit A."/>
            <person name="Reizer A."/>
            <person name="Saier M.H. Jr."/>
        </authorList>
    </citation>
    <scope>DISCUSSION OF SEQUENCE</scope>
</reference>
<reference key="5">
    <citation type="journal article" date="2000" name="J. Bacteriol.">
        <title>Role of the yiaR and yiaS genes of Escherichia coli in metabolism of endogenously formed L-xylulose.</title>
        <authorList>
            <person name="Ibanez E."/>
            <person name="Gimenez R."/>
            <person name="Pedraza T."/>
            <person name="Baldoma L."/>
            <person name="Aguilar J."/>
            <person name="Badia J."/>
        </authorList>
    </citation>
    <scope>FUNCTION</scope>
</reference>
<reference key="6">
    <citation type="journal article" date="2002" name="J. Bacteriol.">
        <title>Utilization of L-ascorbate by Escherichia coli K-12: assignments of functions to products of the yjf-sga and yia-sgb operons.</title>
        <authorList>
            <person name="Yew W.S."/>
            <person name="Gerlt J.A."/>
        </authorList>
    </citation>
    <scope>FUNCTION</scope>
    <scope>CATALYTIC ACTIVITY</scope>
    <scope>BIOPHYSICOCHEMICAL PROPERTIES</scope>
    <source>
        <strain>K12 / MG1655 / ATCC 47076</strain>
    </source>
</reference>
<name>SGBE_ECOLI</name>
<protein>
    <recommendedName>
        <fullName evidence="5">L-ribulose-5-phosphate 4-epimerase SgbE</fullName>
        <ecNumber evidence="4">5.1.3.4</ecNumber>
    </recommendedName>
    <alternativeName>
        <fullName evidence="6">Phosphoribulose isomerase</fullName>
    </alternativeName>
</protein>
<dbReference type="EC" id="5.1.3.4" evidence="4"/>
<dbReference type="EMBL" id="U00039">
    <property type="protein sequence ID" value="AAB18560.1"/>
    <property type="molecule type" value="Genomic_DNA"/>
</dbReference>
<dbReference type="EMBL" id="U00096">
    <property type="protein sequence ID" value="AAC76607.1"/>
    <property type="molecule type" value="Genomic_DNA"/>
</dbReference>
<dbReference type="EMBL" id="AP009048">
    <property type="protein sequence ID" value="BAE77710.1"/>
    <property type="molecule type" value="Genomic_DNA"/>
</dbReference>
<dbReference type="PIR" id="S47804">
    <property type="entry name" value="S47804"/>
</dbReference>
<dbReference type="RefSeq" id="NP_418040.1">
    <property type="nucleotide sequence ID" value="NC_000913.3"/>
</dbReference>
<dbReference type="SMR" id="P37680"/>
<dbReference type="BioGRID" id="4262553">
    <property type="interactions" value="15"/>
</dbReference>
<dbReference type="BioGRID" id="852406">
    <property type="interactions" value="9"/>
</dbReference>
<dbReference type="FunCoup" id="P37680">
    <property type="interactions" value="407"/>
</dbReference>
<dbReference type="IntAct" id="P37680">
    <property type="interactions" value="13"/>
</dbReference>
<dbReference type="STRING" id="511145.b3583"/>
<dbReference type="PaxDb" id="511145-b3583"/>
<dbReference type="EnsemblBacteria" id="AAC76607">
    <property type="protein sequence ID" value="AAC76607"/>
    <property type="gene ID" value="b3583"/>
</dbReference>
<dbReference type="GeneID" id="948099"/>
<dbReference type="KEGG" id="ecj:JW3555"/>
<dbReference type="KEGG" id="eco:b3583"/>
<dbReference type="KEGG" id="ecoc:C3026_19425"/>
<dbReference type="PATRIC" id="fig|511145.12.peg.3698"/>
<dbReference type="EchoBASE" id="EB2195"/>
<dbReference type="eggNOG" id="COG0235">
    <property type="taxonomic scope" value="Bacteria"/>
</dbReference>
<dbReference type="HOGENOM" id="CLU_006033_5_0_6"/>
<dbReference type="InParanoid" id="P37680"/>
<dbReference type="OMA" id="AHERYMT"/>
<dbReference type="OrthoDB" id="9786287at2"/>
<dbReference type="PhylomeDB" id="P37680"/>
<dbReference type="BioCyc" id="EcoCyc:EG12287-MONOMER"/>
<dbReference type="BioCyc" id="MetaCyc:EG12287-MONOMER"/>
<dbReference type="PRO" id="PR:P37680"/>
<dbReference type="Proteomes" id="UP000000625">
    <property type="component" value="Chromosome"/>
</dbReference>
<dbReference type="GO" id="GO:0005829">
    <property type="term" value="C:cytosol"/>
    <property type="evidence" value="ECO:0000318"/>
    <property type="project" value="GO_Central"/>
</dbReference>
<dbReference type="GO" id="GO:0016832">
    <property type="term" value="F:aldehyde-lyase activity"/>
    <property type="evidence" value="ECO:0000318"/>
    <property type="project" value="GO_Central"/>
</dbReference>
<dbReference type="GO" id="GO:0008742">
    <property type="term" value="F:L-ribulose-phosphate 4-epimerase activity"/>
    <property type="evidence" value="ECO:0000314"/>
    <property type="project" value="UniProtKB"/>
</dbReference>
<dbReference type="GO" id="GO:0008270">
    <property type="term" value="F:zinc ion binding"/>
    <property type="evidence" value="ECO:0000250"/>
    <property type="project" value="UniProtKB"/>
</dbReference>
<dbReference type="GO" id="GO:0019572">
    <property type="term" value="P:L-arabinose catabolic process"/>
    <property type="evidence" value="ECO:0007669"/>
    <property type="project" value="InterPro"/>
</dbReference>
<dbReference type="GO" id="GO:0019324">
    <property type="term" value="P:L-lyxose metabolic process"/>
    <property type="evidence" value="ECO:0000315"/>
    <property type="project" value="EcoCyc"/>
</dbReference>
<dbReference type="GO" id="GO:0019323">
    <property type="term" value="P:pentose catabolic process"/>
    <property type="evidence" value="ECO:0000315"/>
    <property type="project" value="EcoCyc"/>
</dbReference>
<dbReference type="CDD" id="cd00398">
    <property type="entry name" value="Aldolase_II"/>
    <property type="match status" value="1"/>
</dbReference>
<dbReference type="FunFam" id="3.40.225.10:FF:000001">
    <property type="entry name" value="L-ribulose-5-phosphate 4-epimerase UlaF"/>
    <property type="match status" value="1"/>
</dbReference>
<dbReference type="Gene3D" id="3.40.225.10">
    <property type="entry name" value="Class II aldolase/adducin N-terminal domain"/>
    <property type="match status" value="1"/>
</dbReference>
<dbReference type="InterPro" id="IPR050197">
    <property type="entry name" value="Aldolase_class_II_sugar_metab"/>
</dbReference>
<dbReference type="InterPro" id="IPR001303">
    <property type="entry name" value="Aldolase_II/adducin_N"/>
</dbReference>
<dbReference type="InterPro" id="IPR036409">
    <property type="entry name" value="Aldolase_II/adducin_N_sf"/>
</dbReference>
<dbReference type="InterPro" id="IPR004661">
    <property type="entry name" value="AraD"/>
</dbReference>
<dbReference type="NCBIfam" id="TIGR00760">
    <property type="entry name" value="araD"/>
    <property type="match status" value="1"/>
</dbReference>
<dbReference type="NCBIfam" id="NF006047">
    <property type="entry name" value="PRK08193.1"/>
    <property type="match status" value="1"/>
</dbReference>
<dbReference type="NCBIfam" id="NF009002">
    <property type="entry name" value="PRK12347.1"/>
    <property type="match status" value="1"/>
</dbReference>
<dbReference type="NCBIfam" id="NF009003">
    <property type="entry name" value="PRK12348.1"/>
    <property type="match status" value="1"/>
</dbReference>
<dbReference type="PANTHER" id="PTHR22789">
    <property type="entry name" value="FUCULOSE PHOSPHATE ALDOLASE"/>
    <property type="match status" value="1"/>
</dbReference>
<dbReference type="PANTHER" id="PTHR22789:SF8">
    <property type="entry name" value="L-RIBULOSE-5-PHOSPHATE 4-EPIMERASE SGBE"/>
    <property type="match status" value="1"/>
</dbReference>
<dbReference type="Pfam" id="PF00596">
    <property type="entry name" value="Aldolase_II"/>
    <property type="match status" value="1"/>
</dbReference>
<dbReference type="SMART" id="SM01007">
    <property type="entry name" value="Aldolase_II"/>
    <property type="match status" value="1"/>
</dbReference>
<dbReference type="SUPFAM" id="SSF53639">
    <property type="entry name" value="AraD/HMP-PK domain-like"/>
    <property type="match status" value="1"/>
</dbReference>
<evidence type="ECO:0000250" key="1">
    <source>
        <dbReference type="UniProtKB" id="P08203"/>
    </source>
</evidence>
<evidence type="ECO:0000250" key="2">
    <source>
        <dbReference type="UniProtKB" id="P0AB87"/>
    </source>
</evidence>
<evidence type="ECO:0000269" key="3">
    <source>
    </source>
</evidence>
<evidence type="ECO:0000269" key="4">
    <source>
    </source>
</evidence>
<evidence type="ECO:0000303" key="5">
    <source>
    </source>
</evidence>
<evidence type="ECO:0000305" key="6"/>
<accession>P37680</accession>
<accession>Q2M7P6</accession>
<proteinExistence type="evidence at protein level"/>
<organism>
    <name type="scientific">Escherichia coli (strain K12)</name>
    <dbReference type="NCBI Taxonomy" id="83333"/>
    <lineage>
        <taxon>Bacteria</taxon>
        <taxon>Pseudomonadati</taxon>
        <taxon>Pseudomonadota</taxon>
        <taxon>Gammaproteobacteria</taxon>
        <taxon>Enterobacterales</taxon>
        <taxon>Enterobacteriaceae</taxon>
        <taxon>Escherichia</taxon>
    </lineage>
</organism>
<comment type="function">
    <text evidence="3 4">Catalyzes the interconversion of L-ribulose 5-phosphate (LRu5P) and D-xylulose 5-phosphate (D-Xu5P) via a retroaldol/aldol mechanism (carbon-carbon bond cleavage analogous to a class II aldolase reaction). May be involved in the utilization of 2,3-diketo-L-gulonate.</text>
</comment>
<comment type="catalytic activity">
    <reaction evidence="4">
        <text>L-ribulose 5-phosphate = D-xylulose 5-phosphate</text>
        <dbReference type="Rhea" id="RHEA:22368"/>
        <dbReference type="ChEBI" id="CHEBI:57737"/>
        <dbReference type="ChEBI" id="CHEBI:58226"/>
        <dbReference type="EC" id="5.1.3.4"/>
    </reaction>
</comment>
<comment type="cofactor">
    <cofactor evidence="1">
        <name>Zn(2+)</name>
        <dbReference type="ChEBI" id="CHEBI:29105"/>
    </cofactor>
    <text evidence="1">Binds 1 zinc ion per subunit.</text>
</comment>
<comment type="biophysicochemical properties">
    <kinetics>
        <KM evidence="4">705 uM for L-ribulose 5-phosphate (LRu5P)</KM>
        <text evidence="4">kcat is 12 sec(-1) with L-ribulose 5-phosphate (LRu5P) as substrate.</text>
    </kinetics>
</comment>
<comment type="similarity">
    <text evidence="6">Belongs to the aldolase class II family. AraD/FucA subfamily.</text>
</comment>
<gene>
    <name evidence="5" type="primary">sgbE</name>
    <name type="synonym">yiaS</name>
    <name type="ordered locus">b3583</name>
    <name type="ordered locus">JW3555</name>
</gene>
<feature type="chain" id="PRO_0000162923" description="L-ribulose-5-phosphate 4-epimerase SgbE">
    <location>
        <begin position="1"/>
        <end position="231"/>
    </location>
</feature>
<feature type="active site" description="Proton donor/acceptor" evidence="1">
    <location>
        <position position="120"/>
    </location>
</feature>
<feature type="active site" description="Proton donor/acceptor" evidence="1">
    <location>
        <position position="229"/>
    </location>
</feature>
<feature type="binding site" evidence="2">
    <location>
        <begin position="27"/>
        <end position="28"/>
    </location>
    <ligand>
        <name>substrate</name>
    </ligand>
</feature>
<feature type="binding site" evidence="2">
    <location>
        <begin position="44"/>
        <end position="45"/>
    </location>
    <ligand>
        <name>substrate</name>
    </ligand>
</feature>
<feature type="binding site" evidence="2">
    <location>
        <begin position="74"/>
        <end position="75"/>
    </location>
    <ligand>
        <name>substrate</name>
    </ligand>
</feature>
<feature type="binding site" evidence="1">
    <location>
        <position position="76"/>
    </location>
    <ligand>
        <name>Zn(2+)</name>
        <dbReference type="ChEBI" id="CHEBI:29105"/>
    </ligand>
</feature>
<feature type="binding site" evidence="1">
    <location>
        <position position="95"/>
    </location>
    <ligand>
        <name>Zn(2+)</name>
        <dbReference type="ChEBI" id="CHEBI:29105"/>
    </ligand>
</feature>
<feature type="binding site" evidence="1">
    <location>
        <position position="97"/>
    </location>
    <ligand>
        <name>Zn(2+)</name>
        <dbReference type="ChEBI" id="CHEBI:29105"/>
    </ligand>
</feature>
<feature type="binding site" evidence="1">
    <location>
        <position position="171"/>
    </location>
    <ligand>
        <name>Zn(2+)</name>
        <dbReference type="ChEBI" id="CHEBI:29105"/>
    </ligand>
</feature>
<sequence length="231" mass="25561">MLEQLKADVLAANLALPAHHLVTFTWGNVSAVDETRQWMVIKPSGVEYDVMTADDMVVVEIASGKVVEGSKKPSSDTPTHLALYRRYAEIGGIVHTHSRHATIWSQAGLDLPAWGTTHADYFYGAIPCTRQMTAEEINGEYEYQTGEVIIETFEERGRSPAQIPAVLVHSHGPFAWGKNAADAVHNAVVLEECAYMGLFSRQLAPQLPAMQNELLDKHYLRKHGANAYYGQ</sequence>
<keyword id="KW-0119">Carbohydrate metabolism</keyword>
<keyword id="KW-0413">Isomerase</keyword>
<keyword id="KW-0479">Metal-binding</keyword>
<keyword id="KW-1185">Reference proteome</keyword>
<keyword id="KW-0862">Zinc</keyword>